<proteinExistence type="evidence at transcript level"/>
<feature type="chain" id="PRO_0000418693" description="CASP-like protein 5A2">
    <location>
        <begin position="1"/>
        <end position="203"/>
    </location>
</feature>
<feature type="topological domain" description="Cytoplasmic" evidence="2">
    <location>
        <begin position="1"/>
        <end position="63"/>
    </location>
</feature>
<feature type="transmembrane region" description="Helical" evidence="2">
    <location>
        <begin position="64"/>
        <end position="84"/>
    </location>
</feature>
<feature type="topological domain" description="Extracellular" evidence="2">
    <location>
        <begin position="85"/>
        <end position="94"/>
    </location>
</feature>
<feature type="transmembrane region" description="Helical" evidence="2">
    <location>
        <begin position="95"/>
        <end position="115"/>
    </location>
</feature>
<feature type="topological domain" description="Cytoplasmic" evidence="2">
    <location>
        <begin position="116"/>
        <end position="139"/>
    </location>
</feature>
<feature type="transmembrane region" description="Helical" evidence="2">
    <location>
        <begin position="140"/>
        <end position="160"/>
    </location>
</feature>
<feature type="topological domain" description="Extracellular" evidence="2">
    <location>
        <begin position="161"/>
        <end position="177"/>
    </location>
</feature>
<feature type="transmembrane region" description="Helical" evidence="2">
    <location>
        <begin position="178"/>
        <end position="198"/>
    </location>
</feature>
<feature type="topological domain" description="Cytoplasmic" evidence="2">
    <location>
        <begin position="199"/>
        <end position="203"/>
    </location>
</feature>
<feature type="region of interest" description="Disordered" evidence="3">
    <location>
        <begin position="39"/>
        <end position="58"/>
    </location>
</feature>
<dbReference type="EMBL" id="DP000086">
    <property type="protein sequence ID" value="ABB47251.1"/>
    <property type="molecule type" value="Genomic_DNA"/>
</dbReference>
<dbReference type="EMBL" id="AP008216">
    <property type="protein sequence ID" value="BAF26302.1"/>
    <property type="molecule type" value="Genomic_DNA"/>
</dbReference>
<dbReference type="EMBL" id="AP014966">
    <property type="protein sequence ID" value="BAT10421.1"/>
    <property type="molecule type" value="Genomic_DNA"/>
</dbReference>
<dbReference type="EMBL" id="CM000147">
    <property type="protein sequence ID" value="EEE50787.1"/>
    <property type="molecule type" value="Genomic_DNA"/>
</dbReference>
<dbReference type="EMBL" id="AK108244">
    <property type="protein sequence ID" value="BAG98339.1"/>
    <property type="molecule type" value="mRNA"/>
</dbReference>
<dbReference type="RefSeq" id="XP_015614351.1">
    <property type="nucleotide sequence ID" value="XM_015758865.1"/>
</dbReference>
<dbReference type="FunCoup" id="Q339M6">
    <property type="interactions" value="1848"/>
</dbReference>
<dbReference type="STRING" id="39947.Q339M6"/>
<dbReference type="PaxDb" id="39947-Q339M6"/>
<dbReference type="EnsemblPlants" id="Os10t0343200-01">
    <property type="protein sequence ID" value="Os10t0343200-01"/>
    <property type="gene ID" value="Os10g0343200"/>
</dbReference>
<dbReference type="Gramene" id="Os10t0343200-01">
    <property type="protein sequence ID" value="Os10t0343200-01"/>
    <property type="gene ID" value="Os10g0343200"/>
</dbReference>
<dbReference type="KEGG" id="dosa:Os10g0343200"/>
<dbReference type="eggNOG" id="ENOG502QTTS">
    <property type="taxonomic scope" value="Eukaryota"/>
</dbReference>
<dbReference type="HOGENOM" id="CLU_103961_0_0_1"/>
<dbReference type="InParanoid" id="Q339M6"/>
<dbReference type="OMA" id="AHNHCAQ"/>
<dbReference type="OrthoDB" id="828022at2759"/>
<dbReference type="Proteomes" id="UP000000763">
    <property type="component" value="Chromosome 10"/>
</dbReference>
<dbReference type="Proteomes" id="UP000007752">
    <property type="component" value="Chromosome 10"/>
</dbReference>
<dbReference type="Proteomes" id="UP000059680">
    <property type="component" value="Chromosome 10"/>
</dbReference>
<dbReference type="GO" id="GO:0016020">
    <property type="term" value="C:membrane"/>
    <property type="evidence" value="ECO:0000318"/>
    <property type="project" value="GO_Central"/>
</dbReference>
<dbReference type="GO" id="GO:0005886">
    <property type="term" value="C:plasma membrane"/>
    <property type="evidence" value="ECO:0007669"/>
    <property type="project" value="UniProtKB-SubCell"/>
</dbReference>
<dbReference type="InterPro" id="IPR006702">
    <property type="entry name" value="CASP_dom"/>
</dbReference>
<dbReference type="InterPro" id="IPR045009">
    <property type="entry name" value="CASPL-5"/>
</dbReference>
<dbReference type="PANTHER" id="PTHR32021:SF19">
    <property type="entry name" value="CASP-LIKE PROTEIN 5A2"/>
    <property type="match status" value="1"/>
</dbReference>
<dbReference type="PANTHER" id="PTHR32021">
    <property type="entry name" value="CASP-LIKE PROTEIN 5B3"/>
    <property type="match status" value="1"/>
</dbReference>
<dbReference type="Pfam" id="PF04535">
    <property type="entry name" value="CASP_dom"/>
    <property type="match status" value="1"/>
</dbReference>
<organism>
    <name type="scientific">Oryza sativa subsp. japonica</name>
    <name type="common">Rice</name>
    <dbReference type="NCBI Taxonomy" id="39947"/>
    <lineage>
        <taxon>Eukaryota</taxon>
        <taxon>Viridiplantae</taxon>
        <taxon>Streptophyta</taxon>
        <taxon>Embryophyta</taxon>
        <taxon>Tracheophyta</taxon>
        <taxon>Spermatophyta</taxon>
        <taxon>Magnoliopsida</taxon>
        <taxon>Liliopsida</taxon>
        <taxon>Poales</taxon>
        <taxon>Poaceae</taxon>
        <taxon>BOP clade</taxon>
        <taxon>Oryzoideae</taxon>
        <taxon>Oryzeae</taxon>
        <taxon>Oryzinae</taxon>
        <taxon>Oryza</taxon>
        <taxon>Oryza sativa</taxon>
    </lineage>
</organism>
<protein>
    <recommendedName>
        <fullName>CASP-like protein 5A2</fullName>
        <shortName>OsCASPL5A2</shortName>
    </recommendedName>
</protein>
<sequence>MRASRPVVHPVEAPPPAALAVAAAAVAVEAGVGAGGGAAAHGGENAQPRGVRMKDPPGAPGTPGGLGLRLVQAFFAAAALAVMASTDDFPSVSAFCYLVAAAILQCLWSLSLAVVDIYALLVKRSLRNPQAVCIFTIGDGITGTLTLGAACASAGITVLIGNDLNICANNHCASFETATAMAFISWFALAPSCVLNFWSMASR</sequence>
<gene>
    <name type="ordered locus">Os10g0343200</name>
    <name type="ordered locus">LOC_Os10g20250</name>
    <name type="ORF">OsJ_31148</name>
</gene>
<evidence type="ECO:0000250" key="1"/>
<evidence type="ECO:0000255" key="2"/>
<evidence type="ECO:0000256" key="3">
    <source>
        <dbReference type="SAM" id="MobiDB-lite"/>
    </source>
</evidence>
<evidence type="ECO:0000305" key="4"/>
<accession>Q339M6</accession>
<accession>A0A0P0XT99</accession>
<keyword id="KW-1003">Cell membrane</keyword>
<keyword id="KW-0472">Membrane</keyword>
<keyword id="KW-1185">Reference proteome</keyword>
<keyword id="KW-0812">Transmembrane</keyword>
<keyword id="KW-1133">Transmembrane helix</keyword>
<comment type="subunit">
    <text evidence="1">Homodimer and heterodimers.</text>
</comment>
<comment type="subcellular location">
    <subcellularLocation>
        <location evidence="1">Cell membrane</location>
        <topology evidence="1">Multi-pass membrane protein</topology>
    </subcellularLocation>
</comment>
<comment type="similarity">
    <text evidence="4">Belongs to the Casparian strip membrane proteins (CASP) family.</text>
</comment>
<name>CSPLT_ORYSJ</name>
<reference key="1">
    <citation type="journal article" date="2003" name="Science">
        <title>In-depth view of structure, activity, and evolution of rice chromosome 10.</title>
        <authorList>
            <person name="Yu Y."/>
            <person name="Rambo T."/>
            <person name="Currie J."/>
            <person name="Saski C."/>
            <person name="Kim H.-R."/>
            <person name="Collura K."/>
            <person name="Thompson S."/>
            <person name="Simmons J."/>
            <person name="Yang T.-J."/>
            <person name="Nah G."/>
            <person name="Patel A.J."/>
            <person name="Thurmond S."/>
            <person name="Henry D."/>
            <person name="Oates R."/>
            <person name="Palmer M."/>
            <person name="Pries G."/>
            <person name="Gibson J."/>
            <person name="Anderson H."/>
            <person name="Paradkar M."/>
            <person name="Crane L."/>
            <person name="Dale J."/>
            <person name="Carver M.B."/>
            <person name="Wood T."/>
            <person name="Frisch D."/>
            <person name="Engler F."/>
            <person name="Soderlund C."/>
            <person name="Palmer L.E."/>
            <person name="Teytelman L."/>
            <person name="Nascimento L."/>
            <person name="De la Bastide M."/>
            <person name="Spiegel L."/>
            <person name="Ware D."/>
            <person name="O'Shaughnessy A."/>
            <person name="Dike S."/>
            <person name="Dedhia N."/>
            <person name="Preston R."/>
            <person name="Huang E."/>
            <person name="Ferraro K."/>
            <person name="Kuit K."/>
            <person name="Miller B."/>
            <person name="Zutavern T."/>
            <person name="Katzenberger F."/>
            <person name="Muller S."/>
            <person name="Balija V."/>
            <person name="Martienssen R.A."/>
            <person name="Stein L."/>
            <person name="Minx P."/>
            <person name="Johnson D."/>
            <person name="Cordum H."/>
            <person name="Mardis E."/>
            <person name="Cheng Z."/>
            <person name="Jiang J."/>
            <person name="Wilson R."/>
            <person name="McCombie W.R."/>
            <person name="Wing R.A."/>
            <person name="Yuan Q."/>
            <person name="Ouyang S."/>
            <person name="Liu J."/>
            <person name="Jones K.M."/>
            <person name="Gansberger K."/>
            <person name="Moffat K."/>
            <person name="Hill J."/>
            <person name="Tsitrin T."/>
            <person name="Overton L."/>
            <person name="Bera J."/>
            <person name="Kim M."/>
            <person name="Jin S."/>
            <person name="Tallon L."/>
            <person name="Ciecko A."/>
            <person name="Pai G."/>
            <person name="Van Aken S."/>
            <person name="Utterback T."/>
            <person name="Reidmuller S."/>
            <person name="Bormann J."/>
            <person name="Feldblyum T."/>
            <person name="Hsiao J."/>
            <person name="Zismann V."/>
            <person name="Blunt S."/>
            <person name="de Vazeille A.R."/>
            <person name="Shaffer T."/>
            <person name="Koo H."/>
            <person name="Suh B."/>
            <person name="Yang Q."/>
            <person name="Haas B."/>
            <person name="Peterson J."/>
            <person name="Pertea M."/>
            <person name="Volfovsky N."/>
            <person name="Wortman J."/>
            <person name="White O."/>
            <person name="Salzberg S.L."/>
            <person name="Fraser C.M."/>
            <person name="Buell C.R."/>
            <person name="Messing J."/>
            <person name="Song R."/>
            <person name="Fuks G."/>
            <person name="Llaca V."/>
            <person name="Kovchak S."/>
            <person name="Young S."/>
            <person name="Bowers J.E."/>
            <person name="Paterson A.H."/>
            <person name="Johns M.A."/>
            <person name="Mao L."/>
            <person name="Pan H."/>
            <person name="Dean R.A."/>
        </authorList>
    </citation>
    <scope>NUCLEOTIDE SEQUENCE [LARGE SCALE GENOMIC DNA]</scope>
    <source>
        <strain>cv. Nipponbare</strain>
    </source>
</reference>
<reference key="2">
    <citation type="journal article" date="2005" name="Nature">
        <title>The map-based sequence of the rice genome.</title>
        <authorList>
            <consortium name="International rice genome sequencing project (IRGSP)"/>
        </authorList>
    </citation>
    <scope>NUCLEOTIDE SEQUENCE [LARGE SCALE GENOMIC DNA]</scope>
    <source>
        <strain>cv. Nipponbare</strain>
    </source>
</reference>
<reference key="3">
    <citation type="journal article" date="2008" name="Nucleic Acids Res.">
        <title>The rice annotation project database (RAP-DB): 2008 update.</title>
        <authorList>
            <consortium name="The rice annotation project (RAP)"/>
        </authorList>
    </citation>
    <scope>GENOME REANNOTATION</scope>
    <source>
        <strain>cv. Nipponbare</strain>
    </source>
</reference>
<reference key="4">
    <citation type="journal article" date="2013" name="Rice">
        <title>Improvement of the Oryza sativa Nipponbare reference genome using next generation sequence and optical map data.</title>
        <authorList>
            <person name="Kawahara Y."/>
            <person name="de la Bastide M."/>
            <person name="Hamilton J.P."/>
            <person name="Kanamori H."/>
            <person name="McCombie W.R."/>
            <person name="Ouyang S."/>
            <person name="Schwartz D.C."/>
            <person name="Tanaka T."/>
            <person name="Wu J."/>
            <person name="Zhou S."/>
            <person name="Childs K.L."/>
            <person name="Davidson R.M."/>
            <person name="Lin H."/>
            <person name="Quesada-Ocampo L."/>
            <person name="Vaillancourt B."/>
            <person name="Sakai H."/>
            <person name="Lee S.S."/>
            <person name="Kim J."/>
            <person name="Numa H."/>
            <person name="Itoh T."/>
            <person name="Buell C.R."/>
            <person name="Matsumoto T."/>
        </authorList>
    </citation>
    <scope>GENOME REANNOTATION</scope>
    <source>
        <strain>cv. Nipponbare</strain>
    </source>
</reference>
<reference key="5">
    <citation type="journal article" date="2005" name="PLoS Biol.">
        <title>The genomes of Oryza sativa: a history of duplications.</title>
        <authorList>
            <person name="Yu J."/>
            <person name="Wang J."/>
            <person name="Lin W."/>
            <person name="Li S."/>
            <person name="Li H."/>
            <person name="Zhou J."/>
            <person name="Ni P."/>
            <person name="Dong W."/>
            <person name="Hu S."/>
            <person name="Zeng C."/>
            <person name="Zhang J."/>
            <person name="Zhang Y."/>
            <person name="Li R."/>
            <person name="Xu Z."/>
            <person name="Li S."/>
            <person name="Li X."/>
            <person name="Zheng H."/>
            <person name="Cong L."/>
            <person name="Lin L."/>
            <person name="Yin J."/>
            <person name="Geng J."/>
            <person name="Li G."/>
            <person name="Shi J."/>
            <person name="Liu J."/>
            <person name="Lv H."/>
            <person name="Li J."/>
            <person name="Wang J."/>
            <person name="Deng Y."/>
            <person name="Ran L."/>
            <person name="Shi X."/>
            <person name="Wang X."/>
            <person name="Wu Q."/>
            <person name="Li C."/>
            <person name="Ren X."/>
            <person name="Wang J."/>
            <person name="Wang X."/>
            <person name="Li D."/>
            <person name="Liu D."/>
            <person name="Zhang X."/>
            <person name="Ji Z."/>
            <person name="Zhao W."/>
            <person name="Sun Y."/>
            <person name="Zhang Z."/>
            <person name="Bao J."/>
            <person name="Han Y."/>
            <person name="Dong L."/>
            <person name="Ji J."/>
            <person name="Chen P."/>
            <person name="Wu S."/>
            <person name="Liu J."/>
            <person name="Xiao Y."/>
            <person name="Bu D."/>
            <person name="Tan J."/>
            <person name="Yang L."/>
            <person name="Ye C."/>
            <person name="Zhang J."/>
            <person name="Xu J."/>
            <person name="Zhou Y."/>
            <person name="Yu Y."/>
            <person name="Zhang B."/>
            <person name="Zhuang S."/>
            <person name="Wei H."/>
            <person name="Liu B."/>
            <person name="Lei M."/>
            <person name="Yu H."/>
            <person name="Li Y."/>
            <person name="Xu H."/>
            <person name="Wei S."/>
            <person name="He X."/>
            <person name="Fang L."/>
            <person name="Zhang Z."/>
            <person name="Zhang Y."/>
            <person name="Huang X."/>
            <person name="Su Z."/>
            <person name="Tong W."/>
            <person name="Li J."/>
            <person name="Tong Z."/>
            <person name="Li S."/>
            <person name="Ye J."/>
            <person name="Wang L."/>
            <person name="Fang L."/>
            <person name="Lei T."/>
            <person name="Chen C.-S."/>
            <person name="Chen H.-C."/>
            <person name="Xu Z."/>
            <person name="Li H."/>
            <person name="Huang H."/>
            <person name="Zhang F."/>
            <person name="Xu H."/>
            <person name="Li N."/>
            <person name="Zhao C."/>
            <person name="Li S."/>
            <person name="Dong L."/>
            <person name="Huang Y."/>
            <person name="Li L."/>
            <person name="Xi Y."/>
            <person name="Qi Q."/>
            <person name="Li W."/>
            <person name="Zhang B."/>
            <person name="Hu W."/>
            <person name="Zhang Y."/>
            <person name="Tian X."/>
            <person name="Jiao Y."/>
            <person name="Liang X."/>
            <person name="Jin J."/>
            <person name="Gao L."/>
            <person name="Zheng W."/>
            <person name="Hao B."/>
            <person name="Liu S.-M."/>
            <person name="Wang W."/>
            <person name="Yuan L."/>
            <person name="Cao M."/>
            <person name="McDermott J."/>
            <person name="Samudrala R."/>
            <person name="Wang J."/>
            <person name="Wong G.K.-S."/>
            <person name="Yang H."/>
        </authorList>
    </citation>
    <scope>NUCLEOTIDE SEQUENCE [LARGE SCALE GENOMIC DNA]</scope>
    <source>
        <strain>cv. Nipponbare</strain>
    </source>
</reference>
<reference key="6">
    <citation type="journal article" date="2003" name="Science">
        <title>Collection, mapping, and annotation of over 28,000 cDNA clones from japonica rice.</title>
        <authorList>
            <consortium name="The rice full-length cDNA consortium"/>
        </authorList>
    </citation>
    <scope>NUCLEOTIDE SEQUENCE [LARGE SCALE MRNA]</scope>
    <source>
        <strain>cv. Nipponbare</strain>
    </source>
</reference>
<reference key="7">
    <citation type="journal article" date="2014" name="Plant Physiol.">
        <title>Functional and evolutionary analysis of the CASPARIAN STRIP MEMBRANE DOMAIN PROTEIN family.</title>
        <authorList>
            <person name="Roppolo D."/>
            <person name="Boeckmann B."/>
            <person name="Pfister A."/>
            <person name="Boutet E."/>
            <person name="Rubio M.C."/>
            <person name="Denervaud-Tendon V."/>
            <person name="Vermeer J.E."/>
            <person name="Gheyselinck J."/>
            <person name="Xenarios I."/>
            <person name="Geldner N."/>
        </authorList>
    </citation>
    <scope>GENE FAMILY</scope>
    <scope>NOMENCLATURE</scope>
</reference>